<name>TNNI1_CAEEL</name>
<evidence type="ECO:0000250" key="1"/>
<evidence type="ECO:0000256" key="2">
    <source>
        <dbReference type="SAM" id="MobiDB-lite"/>
    </source>
</evidence>
<evidence type="ECO:0000269" key="3">
    <source>
    </source>
</evidence>
<evidence type="ECO:0000269" key="4">
    <source>
    </source>
</evidence>
<evidence type="ECO:0000305" key="5"/>
<protein>
    <recommendedName>
        <fullName>Troponin I 1</fullName>
        <shortName>CeTNI-1</shortName>
        <shortName>TnI 1</shortName>
    </recommendedName>
</protein>
<sequence>MSQIDENIRYGGAANETDGEDAQRKAQEREAKKAEVRKRLEEAGQKKQKKGFLTPERKKKLRKLLMNKAAEDLKTQQLRKEQERVKVLAERTVALPNVDSIDDHAKLEAIYNDLFSRLCNLEEEKYDINHITTETETTINQLNIEVNDLRGKFVKPSLKKVSKYDNKFKKMAEAKKEDGSKNLRNNLKTVKKESVFTQIANKKKSDKPEWSKKKEEKKEESAPEPVIEPVEEEETAASEGEEEEEEADEE</sequence>
<reference key="1">
    <citation type="journal article" date="2005" name="Genes Cells">
        <title>Tissue expression of four troponin I genes and their molecular interactions with two troponin C isoforms in Caenorhabditis elegans.</title>
        <authorList>
            <person name="Ruksana R."/>
            <person name="Kuroda K."/>
            <person name="Terami H."/>
            <person name="Bando T."/>
            <person name="Kitaoka S."/>
            <person name="Takaya T."/>
            <person name="Sakube Y."/>
            <person name="Kagawa H."/>
        </authorList>
    </citation>
    <scope>NUCLEOTIDE SEQUENCE [GENOMIC DNA]</scope>
    <scope>TISSUE SPECIFICITY</scope>
</reference>
<reference key="2">
    <citation type="journal article" date="1998" name="Science">
        <title>Genome sequence of the nematode C. elegans: a platform for investigating biology.</title>
        <authorList>
            <consortium name="The C. elegans sequencing consortium"/>
        </authorList>
    </citation>
    <scope>NUCLEOTIDE SEQUENCE [LARGE SCALE GENOMIC DNA]</scope>
    <source>
        <strain>Bristol N2</strain>
    </source>
</reference>
<reference key="3">
    <citation type="journal article" date="2004" name="Biophys. J.">
        <title>Disruption of Caenorhabditis elegans muscle structure and function caused by mutation of troponin I.</title>
        <authorList>
            <person name="Burkeen A.K."/>
            <person name="Maday S.L."/>
            <person name="Rybicka K.K."/>
            <person name="Sulcove J.A."/>
            <person name="Ward J."/>
            <person name="Huang M.M."/>
            <person name="Barstead R."/>
            <person name="Franzini-Armstrong C."/>
            <person name="Allen T.S."/>
        </authorList>
    </citation>
    <scope>TISSUE SPECIFICITY</scope>
    <scope>DISRUPTION PHENOTYPE</scope>
</reference>
<accession>Q20334</accession>
<accession>Q5FBV5</accession>
<gene>
    <name type="primary">tni-1</name>
    <name type="ORF">F42E11.4</name>
</gene>
<proteinExistence type="evidence at transcript level"/>
<feature type="chain" id="PRO_0000186162" description="Troponin I 1">
    <location>
        <begin position="1"/>
        <end position="250"/>
    </location>
</feature>
<feature type="region of interest" description="Disordered" evidence="2">
    <location>
        <begin position="1"/>
        <end position="59"/>
    </location>
</feature>
<feature type="region of interest" description="Disordered" evidence="2">
    <location>
        <begin position="194"/>
        <end position="250"/>
    </location>
</feature>
<feature type="compositionally biased region" description="Basic and acidic residues" evidence="2">
    <location>
        <begin position="21"/>
        <end position="45"/>
    </location>
</feature>
<feature type="compositionally biased region" description="Basic and acidic residues" evidence="2">
    <location>
        <begin position="206"/>
        <end position="221"/>
    </location>
</feature>
<feature type="compositionally biased region" description="Acidic residues" evidence="2">
    <location>
        <begin position="229"/>
        <end position="250"/>
    </location>
</feature>
<organism>
    <name type="scientific">Caenorhabditis elegans</name>
    <dbReference type="NCBI Taxonomy" id="6239"/>
    <lineage>
        <taxon>Eukaryota</taxon>
        <taxon>Metazoa</taxon>
        <taxon>Ecdysozoa</taxon>
        <taxon>Nematoda</taxon>
        <taxon>Chromadorea</taxon>
        <taxon>Rhabditida</taxon>
        <taxon>Rhabditina</taxon>
        <taxon>Rhabditomorpha</taxon>
        <taxon>Rhabditoidea</taxon>
        <taxon>Rhabditidae</taxon>
        <taxon>Peloderinae</taxon>
        <taxon>Caenorhabditis</taxon>
    </lineage>
</organism>
<dbReference type="EMBL" id="AB107358">
    <property type="protein sequence ID" value="BAD89379.1"/>
    <property type="molecule type" value="Genomic_DNA"/>
</dbReference>
<dbReference type="EMBL" id="Z66562">
    <property type="protein sequence ID" value="CAA91466.1"/>
    <property type="molecule type" value="Genomic_DNA"/>
</dbReference>
<dbReference type="PIR" id="T22093">
    <property type="entry name" value="T22093"/>
</dbReference>
<dbReference type="RefSeq" id="NP_509906.1">
    <property type="nucleotide sequence ID" value="NM_077505.8"/>
</dbReference>
<dbReference type="SMR" id="Q20334"/>
<dbReference type="BioGRID" id="46238">
    <property type="interactions" value="8"/>
</dbReference>
<dbReference type="DIP" id="DIP-25521N"/>
<dbReference type="FunCoup" id="Q20334">
    <property type="interactions" value="33"/>
</dbReference>
<dbReference type="IntAct" id="Q20334">
    <property type="interactions" value="1"/>
</dbReference>
<dbReference type="STRING" id="6239.F42E11.4.1"/>
<dbReference type="iPTMnet" id="Q20334"/>
<dbReference type="PaxDb" id="6239-F42E11.4"/>
<dbReference type="PeptideAtlas" id="Q20334"/>
<dbReference type="EnsemblMetazoa" id="F42E11.4.1">
    <property type="protein sequence ID" value="F42E11.4.1"/>
    <property type="gene ID" value="WBGene00006584"/>
</dbReference>
<dbReference type="GeneID" id="181329"/>
<dbReference type="KEGG" id="cel:CELE_F42E11.4"/>
<dbReference type="UCSC" id="F42E11.4">
    <property type="organism name" value="c. elegans"/>
</dbReference>
<dbReference type="AGR" id="WB:WBGene00006584"/>
<dbReference type="CTD" id="181329"/>
<dbReference type="WormBase" id="F42E11.4">
    <property type="protein sequence ID" value="CE03311"/>
    <property type="gene ID" value="WBGene00006584"/>
    <property type="gene designation" value="tni-1"/>
</dbReference>
<dbReference type="eggNOG" id="KOG3977">
    <property type="taxonomic scope" value="Eukaryota"/>
</dbReference>
<dbReference type="GeneTree" id="ENSGT01030000234588"/>
<dbReference type="HOGENOM" id="CLU_053937_0_0_1"/>
<dbReference type="InParanoid" id="Q20334"/>
<dbReference type="OMA" id="KSMMVAK"/>
<dbReference type="OrthoDB" id="371899at2759"/>
<dbReference type="PhylomeDB" id="Q20334"/>
<dbReference type="Reactome" id="R-CEL-5578775">
    <property type="pathway name" value="Ion homeostasis"/>
</dbReference>
<dbReference type="PRO" id="PR:Q20334"/>
<dbReference type="Proteomes" id="UP000001940">
    <property type="component" value="Chromosome X"/>
</dbReference>
<dbReference type="Bgee" id="WBGene00006584">
    <property type="expression patterns" value="Expressed in larva and 7 other cell types or tissues"/>
</dbReference>
<dbReference type="GO" id="GO:0005862">
    <property type="term" value="C:muscle thin filament tropomyosin"/>
    <property type="evidence" value="ECO:0000314"/>
    <property type="project" value="WormBase"/>
</dbReference>
<dbReference type="GO" id="GO:0005861">
    <property type="term" value="C:troponin complex"/>
    <property type="evidence" value="ECO:0000318"/>
    <property type="project" value="GO_Central"/>
</dbReference>
<dbReference type="GO" id="GO:0003779">
    <property type="term" value="F:actin binding"/>
    <property type="evidence" value="ECO:0007669"/>
    <property type="project" value="UniProtKB-KW"/>
</dbReference>
<dbReference type="GO" id="GO:0030172">
    <property type="term" value="F:troponin C binding"/>
    <property type="evidence" value="ECO:0000353"/>
    <property type="project" value="WormBase"/>
</dbReference>
<dbReference type="GO" id="GO:0043057">
    <property type="term" value="P:backward locomotion"/>
    <property type="evidence" value="ECO:0000315"/>
    <property type="project" value="WormBase"/>
</dbReference>
<dbReference type="GO" id="GO:0006936">
    <property type="term" value="P:muscle contraction"/>
    <property type="evidence" value="ECO:0000318"/>
    <property type="project" value="GO_Central"/>
</dbReference>
<dbReference type="FunFam" id="1.20.5.350:FF:000005">
    <property type="entry name" value="Troponin I 1"/>
    <property type="match status" value="1"/>
</dbReference>
<dbReference type="Gene3D" id="1.20.5.350">
    <property type="match status" value="1"/>
</dbReference>
<dbReference type="InterPro" id="IPR001978">
    <property type="entry name" value="Troponin"/>
</dbReference>
<dbReference type="InterPro" id="IPR050875">
    <property type="entry name" value="Troponin_I"/>
</dbReference>
<dbReference type="InterPro" id="IPR038077">
    <property type="entry name" value="Troponin_sf"/>
</dbReference>
<dbReference type="PANTHER" id="PTHR13738">
    <property type="entry name" value="TROPONIN I"/>
    <property type="match status" value="1"/>
</dbReference>
<dbReference type="PANTHER" id="PTHR13738:SF6">
    <property type="entry name" value="TROPONIN I 1"/>
    <property type="match status" value="1"/>
</dbReference>
<dbReference type="Pfam" id="PF00992">
    <property type="entry name" value="Troponin"/>
    <property type="match status" value="1"/>
</dbReference>
<dbReference type="SUPFAM" id="SSF90250">
    <property type="entry name" value="Troponin coil-coiled subunits"/>
    <property type="match status" value="1"/>
</dbReference>
<keyword id="KW-0009">Actin-binding</keyword>
<keyword id="KW-0514">Muscle protein</keyword>
<keyword id="KW-1185">Reference proteome</keyword>
<comment type="function">
    <text evidence="1">Troponin I is the inhibitory subunit of troponin, the thin filament regulatory complex which confers calcium-sensitivity to muscle actomyosin ATPase activity.</text>
</comment>
<comment type="tissue specificity">
    <text evidence="3 4">Strongly expressed in body wall muscle during embryogenesis, reduces during the larval stages to adult. In late-stage larvae and adults, expression is evident in the proximal gonad of both hermaphrodites and males.</text>
</comment>
<comment type="disruption phenotype">
    <text evidence="3">Worms exhibit abnormal locomotion.</text>
</comment>
<comment type="similarity">
    <text evidence="5">Belongs to the troponin I family.</text>
</comment>